<accession>Q52915</accession>
<keyword id="KW-0067">ATP-binding</keyword>
<keyword id="KW-0115">cAMP biosynthesis</keyword>
<keyword id="KW-0456">Lyase</keyword>
<keyword id="KW-0460">Magnesium</keyword>
<keyword id="KW-0479">Metal-binding</keyword>
<keyword id="KW-0547">Nucleotide-binding</keyword>
<keyword id="KW-1185">Reference proteome</keyword>
<reference key="1">
    <citation type="journal article" date="1995" name="FEMS Microbiol. Lett.">
        <title>Cloning of the second adenylate cyclase gene (cya2) from Rhizobium meliloti F34: sequence similarity to eukaryotic cyclases.</title>
        <authorList>
            <person name="Archdeacon J."/>
            <person name="Talty J."/>
            <person name="Boesten B."/>
            <person name="Danchin A."/>
            <person name="O'Gara F."/>
        </authorList>
    </citation>
    <scope>NUCLEOTIDE SEQUENCE [GENOMIC DNA]</scope>
    <source>
        <strain>F34</strain>
    </source>
</reference>
<reference key="2">
    <citation type="journal article" date="2001" name="Proc. Natl. Acad. Sci. U.S.A.">
        <title>Analysis of the chromosome sequence of the legume symbiont Sinorhizobium meliloti strain 1021.</title>
        <authorList>
            <person name="Capela D."/>
            <person name="Barloy-Hubler F."/>
            <person name="Gouzy J."/>
            <person name="Bothe G."/>
            <person name="Ampe F."/>
            <person name="Batut J."/>
            <person name="Boistard P."/>
            <person name="Becker A."/>
            <person name="Boutry M."/>
            <person name="Cadieu E."/>
            <person name="Dreano S."/>
            <person name="Gloux S."/>
            <person name="Godrie T."/>
            <person name="Goffeau A."/>
            <person name="Kahn D."/>
            <person name="Kiss E."/>
            <person name="Lelaure V."/>
            <person name="Masuy D."/>
            <person name="Pohl T."/>
            <person name="Portetelle D."/>
            <person name="Puehler A."/>
            <person name="Purnelle B."/>
            <person name="Ramsperger U."/>
            <person name="Renard C."/>
            <person name="Thebault P."/>
            <person name="Vandenbol M."/>
            <person name="Weidner S."/>
            <person name="Galibert F."/>
        </authorList>
    </citation>
    <scope>NUCLEOTIDE SEQUENCE [LARGE SCALE GENOMIC DNA]</scope>
    <source>
        <strain>1021</strain>
    </source>
</reference>
<reference key="3">
    <citation type="journal article" date="2001" name="Science">
        <title>The composite genome of the legume symbiont Sinorhizobium meliloti.</title>
        <authorList>
            <person name="Galibert F."/>
            <person name="Finan T.M."/>
            <person name="Long S.R."/>
            <person name="Puehler A."/>
            <person name="Abola P."/>
            <person name="Ampe F."/>
            <person name="Barloy-Hubler F."/>
            <person name="Barnett M.J."/>
            <person name="Becker A."/>
            <person name="Boistard P."/>
            <person name="Bothe G."/>
            <person name="Boutry M."/>
            <person name="Bowser L."/>
            <person name="Buhrmester J."/>
            <person name="Cadieu E."/>
            <person name="Capela D."/>
            <person name="Chain P."/>
            <person name="Cowie A."/>
            <person name="Davis R.W."/>
            <person name="Dreano S."/>
            <person name="Federspiel N.A."/>
            <person name="Fisher R.F."/>
            <person name="Gloux S."/>
            <person name="Godrie T."/>
            <person name="Goffeau A."/>
            <person name="Golding B."/>
            <person name="Gouzy J."/>
            <person name="Gurjal M."/>
            <person name="Hernandez-Lucas I."/>
            <person name="Hong A."/>
            <person name="Huizar L."/>
            <person name="Hyman R.W."/>
            <person name="Jones T."/>
            <person name="Kahn D."/>
            <person name="Kahn M.L."/>
            <person name="Kalman S."/>
            <person name="Keating D.H."/>
            <person name="Kiss E."/>
            <person name="Komp C."/>
            <person name="Lelaure V."/>
            <person name="Masuy D."/>
            <person name="Palm C."/>
            <person name="Peck M.C."/>
            <person name="Pohl T.M."/>
            <person name="Portetelle D."/>
            <person name="Purnelle B."/>
            <person name="Ramsperger U."/>
            <person name="Surzycki R."/>
            <person name="Thebault P."/>
            <person name="Vandenbol M."/>
            <person name="Vorhoelter F.J."/>
            <person name="Weidner S."/>
            <person name="Wells D.H."/>
            <person name="Wong K."/>
            <person name="Yeh K.-C."/>
            <person name="Batut J."/>
        </authorList>
    </citation>
    <scope>NUCLEOTIDE SEQUENCE [LARGE SCALE GENOMIC DNA]</scope>
    <source>
        <strain>1021</strain>
    </source>
</reference>
<organism>
    <name type="scientific">Rhizobium meliloti (strain 1021)</name>
    <name type="common">Ensifer meliloti</name>
    <name type="synonym">Sinorhizobium meliloti</name>
    <dbReference type="NCBI Taxonomy" id="266834"/>
    <lineage>
        <taxon>Bacteria</taxon>
        <taxon>Pseudomonadati</taxon>
        <taxon>Pseudomonadota</taxon>
        <taxon>Alphaproteobacteria</taxon>
        <taxon>Hyphomicrobiales</taxon>
        <taxon>Rhizobiaceae</taxon>
        <taxon>Sinorhizobium/Ensifer group</taxon>
        <taxon>Sinorhizobium</taxon>
    </lineage>
</organism>
<gene>
    <name type="primary">cya2</name>
    <name type="ordered locus">R01190</name>
    <name type="ORF">SMc00621</name>
</gene>
<dbReference type="EC" id="4.6.1.1"/>
<dbReference type="EMBL" id="X80991">
    <property type="protein sequence ID" value="CAA56916.1"/>
    <property type="molecule type" value="Genomic_DNA"/>
</dbReference>
<dbReference type="EMBL" id="AL591688">
    <property type="protein sequence ID" value="CAC45769.1"/>
    <property type="molecule type" value="Genomic_DNA"/>
</dbReference>
<dbReference type="PIR" id="S60684">
    <property type="entry name" value="S60684"/>
</dbReference>
<dbReference type="RefSeq" id="NP_385296.1">
    <property type="nucleotide sequence ID" value="NC_003047.1"/>
</dbReference>
<dbReference type="RefSeq" id="WP_010969098.1">
    <property type="nucleotide sequence ID" value="NC_003047.1"/>
</dbReference>
<dbReference type="SMR" id="Q52915"/>
<dbReference type="EnsemblBacteria" id="CAC45769">
    <property type="protein sequence ID" value="CAC45769"/>
    <property type="gene ID" value="SMc00621"/>
</dbReference>
<dbReference type="KEGG" id="sme:SMc00621"/>
<dbReference type="PATRIC" id="fig|266834.11.peg.2601"/>
<dbReference type="eggNOG" id="COG2114">
    <property type="taxonomic scope" value="Bacteria"/>
</dbReference>
<dbReference type="HOGENOM" id="CLU_055425_0_0_5"/>
<dbReference type="OrthoDB" id="9768499at2"/>
<dbReference type="Proteomes" id="UP000001976">
    <property type="component" value="Chromosome"/>
</dbReference>
<dbReference type="GO" id="GO:0004016">
    <property type="term" value="F:adenylate cyclase activity"/>
    <property type="evidence" value="ECO:0007669"/>
    <property type="project" value="UniProtKB-EC"/>
</dbReference>
<dbReference type="GO" id="GO:0005524">
    <property type="term" value="F:ATP binding"/>
    <property type="evidence" value="ECO:0007669"/>
    <property type="project" value="UniProtKB-KW"/>
</dbReference>
<dbReference type="GO" id="GO:0046872">
    <property type="term" value="F:metal ion binding"/>
    <property type="evidence" value="ECO:0007669"/>
    <property type="project" value="UniProtKB-KW"/>
</dbReference>
<dbReference type="GO" id="GO:0006171">
    <property type="term" value="P:cAMP biosynthetic process"/>
    <property type="evidence" value="ECO:0007669"/>
    <property type="project" value="UniProtKB-KW"/>
</dbReference>
<dbReference type="GO" id="GO:0035556">
    <property type="term" value="P:intracellular signal transduction"/>
    <property type="evidence" value="ECO:0007669"/>
    <property type="project" value="InterPro"/>
</dbReference>
<dbReference type="CDD" id="cd07302">
    <property type="entry name" value="CHD"/>
    <property type="match status" value="1"/>
</dbReference>
<dbReference type="Gene3D" id="3.30.70.1230">
    <property type="entry name" value="Nucleotide cyclase"/>
    <property type="match status" value="1"/>
</dbReference>
<dbReference type="InterPro" id="IPR001054">
    <property type="entry name" value="A/G_cyclase"/>
</dbReference>
<dbReference type="InterPro" id="IPR050697">
    <property type="entry name" value="Adenylyl/Guanylyl_Cyclase_3/4"/>
</dbReference>
<dbReference type="InterPro" id="IPR029787">
    <property type="entry name" value="Nucleotide_cyclase"/>
</dbReference>
<dbReference type="PANTHER" id="PTHR43081:SF1">
    <property type="entry name" value="ADENYLATE CYCLASE, TERMINAL-DIFFERENTIATION SPECIFIC"/>
    <property type="match status" value="1"/>
</dbReference>
<dbReference type="PANTHER" id="PTHR43081">
    <property type="entry name" value="ADENYLATE CYCLASE, TERMINAL-DIFFERENTIATION SPECIFIC-RELATED"/>
    <property type="match status" value="1"/>
</dbReference>
<dbReference type="Pfam" id="PF00211">
    <property type="entry name" value="Guanylate_cyc"/>
    <property type="match status" value="1"/>
</dbReference>
<dbReference type="SMART" id="SM00044">
    <property type="entry name" value="CYCc"/>
    <property type="match status" value="1"/>
</dbReference>
<dbReference type="SUPFAM" id="SSF55073">
    <property type="entry name" value="Nucleotide cyclase"/>
    <property type="match status" value="1"/>
</dbReference>
<dbReference type="PROSITE" id="PS50125">
    <property type="entry name" value="GUANYLATE_CYCLASE_2"/>
    <property type="match status" value="1"/>
</dbReference>
<name>CYA2_RHIME</name>
<comment type="function">
    <text>Plays essential roles in regulation of cellular metabolism by catalyzing the synthesis of a second messenger, cAMP.</text>
</comment>
<comment type="catalytic activity">
    <reaction>
        <text>ATP = 3',5'-cyclic AMP + diphosphate</text>
        <dbReference type="Rhea" id="RHEA:15389"/>
        <dbReference type="ChEBI" id="CHEBI:30616"/>
        <dbReference type="ChEBI" id="CHEBI:33019"/>
        <dbReference type="ChEBI" id="CHEBI:58165"/>
        <dbReference type="EC" id="4.6.1.1"/>
    </reaction>
</comment>
<comment type="cofactor">
    <cofactor evidence="1">
        <name>Mg(2+)</name>
        <dbReference type="ChEBI" id="CHEBI:18420"/>
    </cofactor>
    <text evidence="1">Binds 1 Mg(2+) ion per subunit.</text>
</comment>
<comment type="similarity">
    <text evidence="4">Belongs to the adenylyl cyclase class-3 family.</text>
</comment>
<sequence length="363" mass="39902">MRWRFSTLEIILLLLVVAGSGMAYAWVVYGGGGLIGATYALFMCMPILAFERHIIFRRLYRRIHGSPTPAFLLSSLAVYFIFVNVGYAAAGLLLHVAGVMRESRTDAMLPSLNVLVYALATSGPIIFVLRVRELLGRDVFLSLLTGRYRKPVQEERVFLFIDLAGSTSLAERFGDLRMQEYLGKLFAAMADPVLRYGGSIDDYVGDAAVITWPYDRAVADAACIRCVFDILEQIEADAHRWQKDYGEVPRLRAALHGGTIVAAEIGVDKHKITYFGDTVNTTARLEGLCRTLNRQVLISADLLRRLRPPVFVRAEDLGEHEVKGRGQKLAVLSLTAGSLSGDGATEPAGETVRSPAAEAFTSL</sequence>
<proteinExistence type="inferred from homology"/>
<feature type="chain" id="PRO_0000195745" description="Adenylate cyclase 2">
    <location>
        <begin position="1"/>
        <end position="363"/>
    </location>
</feature>
<feature type="domain" description="Guanylate cyclase" evidence="2">
    <location>
        <begin position="157"/>
        <end position="286"/>
    </location>
</feature>
<feature type="region of interest" description="Disordered" evidence="3">
    <location>
        <begin position="341"/>
        <end position="363"/>
    </location>
</feature>
<feature type="binding site" evidence="1">
    <location>
        <position position="162"/>
    </location>
    <ligand>
        <name>Mg(2+)</name>
        <dbReference type="ChEBI" id="CHEBI:18420"/>
    </ligand>
</feature>
<feature type="binding site" evidence="1">
    <location>
        <position position="206"/>
    </location>
    <ligand>
        <name>Mg(2+)</name>
        <dbReference type="ChEBI" id="CHEBI:18420"/>
    </ligand>
</feature>
<feature type="sequence conflict" description="In Ref. 1; CAA56916." evidence="4" ref="1">
    <original>Q</original>
    <variation>H</variation>
    <location>
        <position position="179"/>
    </location>
</feature>
<feature type="sequence conflict" description="In Ref. 1; CAA56916." evidence="4" ref="1">
    <original>L</original>
    <variation>R</variation>
    <location>
        <position position="302"/>
    </location>
</feature>
<protein>
    <recommendedName>
        <fullName>Adenylate cyclase 2</fullName>
        <ecNumber>4.6.1.1</ecNumber>
    </recommendedName>
    <alternativeName>
        <fullName>ATP pyrophosphate-lyase 2</fullName>
    </alternativeName>
    <alternativeName>
        <fullName>Adenylyl cyclase 2</fullName>
    </alternativeName>
</protein>
<evidence type="ECO:0000250" key="1"/>
<evidence type="ECO:0000255" key="2">
    <source>
        <dbReference type="PROSITE-ProRule" id="PRU00099"/>
    </source>
</evidence>
<evidence type="ECO:0000256" key="3">
    <source>
        <dbReference type="SAM" id="MobiDB-lite"/>
    </source>
</evidence>
<evidence type="ECO:0000305" key="4"/>